<organism>
    <name type="scientific">Methanococcus maripaludis (strain C5 / ATCC BAA-1333)</name>
    <dbReference type="NCBI Taxonomy" id="402880"/>
    <lineage>
        <taxon>Archaea</taxon>
        <taxon>Methanobacteriati</taxon>
        <taxon>Methanobacteriota</taxon>
        <taxon>Methanomada group</taxon>
        <taxon>Methanococci</taxon>
        <taxon>Methanococcales</taxon>
        <taxon>Methanococcaceae</taxon>
        <taxon>Methanococcus</taxon>
    </lineage>
</organism>
<proteinExistence type="inferred from homology"/>
<sequence length="460" mass="53274">MEFSEWYSDILEKAGIYDLRYPIKGCGVYLPYGFKIRRYSFEILRKLLDETNHDETLFPMLIPENLLAKEGEHIKGFEDEVFWVTHGGKTPLEVKLALRPTSETTMYYMMKQWIKVHTDLPMKLYQVVNTFRYETKHTRPLIRLREIMSFKEAHTAHATKEDCDAQITEALNLYGEFFDEICVPYIISKRPEWDKFPGADYTMAFDTIYPDGKTMQIGTVHNLGQNFAKTFELEFETPDGEKDFVYQTCYGISDRAIASLISVHGDEKGLVIPVDVAPIQIVLIPLLFKGKEEIVMDKIKELNNTLKSEFRVHLDDRDIRPGRKYNDWEIKGVPLRIELGPRDIENGQALIVRRDTGEKITVEYSNILEEVEKIVSMYKENLKIKADEKIKNFLTVVNFESDVNALSEKVKAALLENKGIILIPFDESVYNEEFEELIDASVLGQTAYEGKDYISVARTY</sequence>
<feature type="chain" id="PRO_0000318776" description="Proline--tRNA ligase">
    <location>
        <begin position="1"/>
        <end position="460"/>
    </location>
</feature>
<keyword id="KW-0030">Aminoacyl-tRNA synthetase</keyword>
<keyword id="KW-0067">ATP-binding</keyword>
<keyword id="KW-0963">Cytoplasm</keyword>
<keyword id="KW-0436">Ligase</keyword>
<keyword id="KW-0547">Nucleotide-binding</keyword>
<keyword id="KW-0648">Protein biosynthesis</keyword>
<comment type="function">
    <text evidence="1">Catalyzes the attachment of proline to tRNA(Pro) in a two-step reaction: proline is first activated by ATP to form Pro-AMP and then transferred to the acceptor end of tRNA(Pro).</text>
</comment>
<comment type="catalytic activity">
    <reaction evidence="1">
        <text>tRNA(Pro) + L-proline + ATP = L-prolyl-tRNA(Pro) + AMP + diphosphate</text>
        <dbReference type="Rhea" id="RHEA:14305"/>
        <dbReference type="Rhea" id="RHEA-COMP:9700"/>
        <dbReference type="Rhea" id="RHEA-COMP:9702"/>
        <dbReference type="ChEBI" id="CHEBI:30616"/>
        <dbReference type="ChEBI" id="CHEBI:33019"/>
        <dbReference type="ChEBI" id="CHEBI:60039"/>
        <dbReference type="ChEBI" id="CHEBI:78442"/>
        <dbReference type="ChEBI" id="CHEBI:78532"/>
        <dbReference type="ChEBI" id="CHEBI:456215"/>
        <dbReference type="EC" id="6.1.1.15"/>
    </reaction>
</comment>
<comment type="subunit">
    <text evidence="1">Homodimer.</text>
</comment>
<comment type="subcellular location">
    <subcellularLocation>
        <location evidence="1">Cytoplasm</location>
    </subcellularLocation>
</comment>
<comment type="domain">
    <text evidence="1">Consists of three domains: the N-terminal catalytic domain, the anticodon-binding domain and the C-terminal extension.</text>
</comment>
<comment type="similarity">
    <text evidence="1">Belongs to the class-II aminoacyl-tRNA synthetase family. ProS type 3 subfamily.</text>
</comment>
<reference key="1">
    <citation type="submission" date="2007-03" db="EMBL/GenBank/DDBJ databases">
        <title>Complete sequence of chromosome of Methanococcus maripaludis C5.</title>
        <authorList>
            <consortium name="US DOE Joint Genome Institute"/>
            <person name="Copeland A."/>
            <person name="Lucas S."/>
            <person name="Lapidus A."/>
            <person name="Barry K."/>
            <person name="Glavina del Rio T."/>
            <person name="Dalin E."/>
            <person name="Tice H."/>
            <person name="Pitluck S."/>
            <person name="Chertkov O."/>
            <person name="Brettin T."/>
            <person name="Bruce D."/>
            <person name="Han C."/>
            <person name="Detter J.C."/>
            <person name="Schmutz J."/>
            <person name="Larimer F."/>
            <person name="Land M."/>
            <person name="Hauser L."/>
            <person name="Kyrpides N."/>
            <person name="Mikhailova N."/>
            <person name="Sieprawska-Lupa M."/>
            <person name="Whitman W.B."/>
            <person name="Richardson P."/>
        </authorList>
    </citation>
    <scope>NUCLEOTIDE SEQUENCE [LARGE SCALE GENOMIC DNA]</scope>
    <source>
        <strain>C5 / ATCC BAA-1333</strain>
    </source>
</reference>
<accession>A4FYA4</accession>
<name>SYP_METM5</name>
<dbReference type="EC" id="6.1.1.15" evidence="1"/>
<dbReference type="EMBL" id="CP000609">
    <property type="protein sequence ID" value="ABO35188.1"/>
    <property type="molecule type" value="Genomic_DNA"/>
</dbReference>
<dbReference type="RefSeq" id="WP_011868642.1">
    <property type="nucleotide sequence ID" value="NC_009135.1"/>
</dbReference>
<dbReference type="SMR" id="A4FYA4"/>
<dbReference type="STRING" id="402880.MmarC5_0880"/>
<dbReference type="GeneID" id="4929300"/>
<dbReference type="KEGG" id="mmq:MmarC5_0880"/>
<dbReference type="eggNOG" id="arCOG00402">
    <property type="taxonomic scope" value="Archaea"/>
</dbReference>
<dbReference type="HOGENOM" id="CLU_001882_4_2_2"/>
<dbReference type="OrthoDB" id="7375at2157"/>
<dbReference type="Proteomes" id="UP000000253">
    <property type="component" value="Chromosome"/>
</dbReference>
<dbReference type="GO" id="GO:0017101">
    <property type="term" value="C:aminoacyl-tRNA synthetase multienzyme complex"/>
    <property type="evidence" value="ECO:0007669"/>
    <property type="project" value="TreeGrafter"/>
</dbReference>
<dbReference type="GO" id="GO:0005737">
    <property type="term" value="C:cytoplasm"/>
    <property type="evidence" value="ECO:0007669"/>
    <property type="project" value="UniProtKB-SubCell"/>
</dbReference>
<dbReference type="GO" id="GO:0005524">
    <property type="term" value="F:ATP binding"/>
    <property type="evidence" value="ECO:0007669"/>
    <property type="project" value="UniProtKB-UniRule"/>
</dbReference>
<dbReference type="GO" id="GO:0004827">
    <property type="term" value="F:proline-tRNA ligase activity"/>
    <property type="evidence" value="ECO:0007669"/>
    <property type="project" value="UniProtKB-UniRule"/>
</dbReference>
<dbReference type="GO" id="GO:0006433">
    <property type="term" value="P:prolyl-tRNA aminoacylation"/>
    <property type="evidence" value="ECO:0007669"/>
    <property type="project" value="UniProtKB-UniRule"/>
</dbReference>
<dbReference type="CDD" id="cd00778">
    <property type="entry name" value="ProRS_core_arch_euk"/>
    <property type="match status" value="1"/>
</dbReference>
<dbReference type="FunFam" id="3.30.930.10:FF:000037">
    <property type="entry name" value="Proline--tRNA ligase"/>
    <property type="match status" value="1"/>
</dbReference>
<dbReference type="Gene3D" id="3.40.50.800">
    <property type="entry name" value="Anticodon-binding domain"/>
    <property type="match status" value="1"/>
</dbReference>
<dbReference type="Gene3D" id="3.30.930.10">
    <property type="entry name" value="Bira Bifunctional Protein, Domain 2"/>
    <property type="match status" value="1"/>
</dbReference>
<dbReference type="Gene3D" id="3.30.110.30">
    <property type="entry name" value="C-terminal domain of ProRS"/>
    <property type="match status" value="1"/>
</dbReference>
<dbReference type="HAMAP" id="MF_01571">
    <property type="entry name" value="Pro_tRNA_synth_type3"/>
    <property type="match status" value="1"/>
</dbReference>
<dbReference type="InterPro" id="IPR002314">
    <property type="entry name" value="aa-tRNA-synt_IIb"/>
</dbReference>
<dbReference type="InterPro" id="IPR006195">
    <property type="entry name" value="aa-tRNA-synth_II"/>
</dbReference>
<dbReference type="InterPro" id="IPR045864">
    <property type="entry name" value="aa-tRNA-synth_II/BPL/LPL"/>
</dbReference>
<dbReference type="InterPro" id="IPR004154">
    <property type="entry name" value="Anticodon-bd"/>
</dbReference>
<dbReference type="InterPro" id="IPR036621">
    <property type="entry name" value="Anticodon-bd_dom_sf"/>
</dbReference>
<dbReference type="InterPro" id="IPR002316">
    <property type="entry name" value="Pro-tRNA-ligase_IIa"/>
</dbReference>
<dbReference type="InterPro" id="IPR004499">
    <property type="entry name" value="Pro-tRNA-ligase_IIa_arc-type"/>
</dbReference>
<dbReference type="InterPro" id="IPR017449">
    <property type="entry name" value="Pro-tRNA_synth_II"/>
</dbReference>
<dbReference type="InterPro" id="IPR015264">
    <property type="entry name" value="Pro-tRNA_synth_II_arc"/>
</dbReference>
<dbReference type="InterPro" id="IPR033721">
    <property type="entry name" value="ProRS_core_arch_euk"/>
</dbReference>
<dbReference type="NCBIfam" id="TIGR00408">
    <property type="entry name" value="proS_fam_I"/>
    <property type="match status" value="1"/>
</dbReference>
<dbReference type="PANTHER" id="PTHR43382:SF2">
    <property type="entry name" value="BIFUNCTIONAL GLUTAMATE_PROLINE--TRNA LIGASE"/>
    <property type="match status" value="1"/>
</dbReference>
<dbReference type="PANTHER" id="PTHR43382">
    <property type="entry name" value="PROLYL-TRNA SYNTHETASE"/>
    <property type="match status" value="1"/>
</dbReference>
<dbReference type="Pfam" id="PF03129">
    <property type="entry name" value="HGTP_anticodon"/>
    <property type="match status" value="1"/>
</dbReference>
<dbReference type="Pfam" id="PF09181">
    <property type="entry name" value="ProRS-C_2"/>
    <property type="match status" value="1"/>
</dbReference>
<dbReference type="Pfam" id="PF00587">
    <property type="entry name" value="tRNA-synt_2b"/>
    <property type="match status" value="1"/>
</dbReference>
<dbReference type="PRINTS" id="PR01046">
    <property type="entry name" value="TRNASYNTHPRO"/>
</dbReference>
<dbReference type="SUPFAM" id="SSF64586">
    <property type="entry name" value="C-terminal domain of ProRS"/>
    <property type="match status" value="1"/>
</dbReference>
<dbReference type="SUPFAM" id="SSF52954">
    <property type="entry name" value="Class II aaRS ABD-related"/>
    <property type="match status" value="1"/>
</dbReference>
<dbReference type="SUPFAM" id="SSF55681">
    <property type="entry name" value="Class II aaRS and biotin synthetases"/>
    <property type="match status" value="1"/>
</dbReference>
<dbReference type="PROSITE" id="PS50862">
    <property type="entry name" value="AA_TRNA_LIGASE_II"/>
    <property type="match status" value="1"/>
</dbReference>
<protein>
    <recommendedName>
        <fullName evidence="1">Proline--tRNA ligase</fullName>
        <ecNumber evidence="1">6.1.1.15</ecNumber>
    </recommendedName>
    <alternativeName>
        <fullName evidence="1">Prolyl-tRNA synthetase</fullName>
        <shortName evidence="1">ProRS</shortName>
    </alternativeName>
</protein>
<gene>
    <name evidence="1" type="primary">proS</name>
    <name type="ordered locus">MmarC5_0880</name>
</gene>
<evidence type="ECO:0000255" key="1">
    <source>
        <dbReference type="HAMAP-Rule" id="MF_01571"/>
    </source>
</evidence>